<dbReference type="EC" id="5.4.2.11" evidence="1"/>
<dbReference type="EMBL" id="BX571856">
    <property type="protein sequence ID" value="CAG41486.1"/>
    <property type="molecule type" value="Genomic_DNA"/>
</dbReference>
<dbReference type="RefSeq" id="WP_001125210.1">
    <property type="nucleotide sequence ID" value="NC_002952.2"/>
</dbReference>
<dbReference type="SMR" id="Q6GE17"/>
<dbReference type="KEGG" id="sar:SAR2506"/>
<dbReference type="HOGENOM" id="CLU_033323_1_5_9"/>
<dbReference type="UniPathway" id="UPA00109">
    <property type="reaction ID" value="UER00186"/>
</dbReference>
<dbReference type="Proteomes" id="UP000000596">
    <property type="component" value="Chromosome"/>
</dbReference>
<dbReference type="GO" id="GO:0004619">
    <property type="term" value="F:phosphoglycerate mutase activity"/>
    <property type="evidence" value="ECO:0007669"/>
    <property type="project" value="UniProtKB-EC"/>
</dbReference>
<dbReference type="GO" id="GO:0006094">
    <property type="term" value="P:gluconeogenesis"/>
    <property type="evidence" value="ECO:0007669"/>
    <property type="project" value="UniProtKB-UniRule"/>
</dbReference>
<dbReference type="GO" id="GO:0006096">
    <property type="term" value="P:glycolytic process"/>
    <property type="evidence" value="ECO:0007669"/>
    <property type="project" value="UniProtKB-UniRule"/>
</dbReference>
<dbReference type="CDD" id="cd07067">
    <property type="entry name" value="HP_PGM_like"/>
    <property type="match status" value="1"/>
</dbReference>
<dbReference type="FunFam" id="3.40.50.1240:FF:000003">
    <property type="entry name" value="2,3-bisphosphoglycerate-dependent phosphoglycerate mutase"/>
    <property type="match status" value="1"/>
</dbReference>
<dbReference type="Gene3D" id="3.40.50.1240">
    <property type="entry name" value="Phosphoglycerate mutase-like"/>
    <property type="match status" value="1"/>
</dbReference>
<dbReference type="HAMAP" id="MF_01039">
    <property type="entry name" value="PGAM_GpmA"/>
    <property type="match status" value="1"/>
</dbReference>
<dbReference type="InterPro" id="IPR013078">
    <property type="entry name" value="His_Pase_superF_clade-1"/>
</dbReference>
<dbReference type="InterPro" id="IPR029033">
    <property type="entry name" value="His_PPase_superfam"/>
</dbReference>
<dbReference type="InterPro" id="IPR001345">
    <property type="entry name" value="PG/BPGM_mutase_AS"/>
</dbReference>
<dbReference type="InterPro" id="IPR005952">
    <property type="entry name" value="Phosphogly_mut1"/>
</dbReference>
<dbReference type="NCBIfam" id="TIGR01258">
    <property type="entry name" value="pgm_1"/>
    <property type="match status" value="1"/>
</dbReference>
<dbReference type="NCBIfam" id="NF010713">
    <property type="entry name" value="PRK14115.1"/>
    <property type="match status" value="1"/>
</dbReference>
<dbReference type="NCBIfam" id="NF010717">
    <property type="entry name" value="PRK14119.1"/>
    <property type="match status" value="1"/>
</dbReference>
<dbReference type="PANTHER" id="PTHR11931">
    <property type="entry name" value="PHOSPHOGLYCERATE MUTASE"/>
    <property type="match status" value="1"/>
</dbReference>
<dbReference type="Pfam" id="PF00300">
    <property type="entry name" value="His_Phos_1"/>
    <property type="match status" value="1"/>
</dbReference>
<dbReference type="PIRSF" id="PIRSF000709">
    <property type="entry name" value="6PFK_2-Ptase"/>
    <property type="match status" value="1"/>
</dbReference>
<dbReference type="SMART" id="SM00855">
    <property type="entry name" value="PGAM"/>
    <property type="match status" value="1"/>
</dbReference>
<dbReference type="SUPFAM" id="SSF53254">
    <property type="entry name" value="Phosphoglycerate mutase-like"/>
    <property type="match status" value="1"/>
</dbReference>
<dbReference type="PROSITE" id="PS00175">
    <property type="entry name" value="PG_MUTASE"/>
    <property type="match status" value="1"/>
</dbReference>
<keyword id="KW-0312">Gluconeogenesis</keyword>
<keyword id="KW-0324">Glycolysis</keyword>
<keyword id="KW-0413">Isomerase</keyword>
<feature type="chain" id="PRO_0000179913" description="2,3-bisphosphoglycerate-dependent phosphoglycerate mutase">
    <location>
        <begin position="1"/>
        <end position="228"/>
    </location>
</feature>
<feature type="active site" description="Tele-phosphohistidine intermediate" evidence="1">
    <location>
        <position position="9"/>
    </location>
</feature>
<feature type="active site" description="Proton donor/acceptor" evidence="1">
    <location>
        <position position="87"/>
    </location>
</feature>
<feature type="binding site" evidence="1">
    <location>
        <begin position="8"/>
        <end position="15"/>
    </location>
    <ligand>
        <name>substrate</name>
    </ligand>
</feature>
<feature type="binding site" evidence="1">
    <location>
        <begin position="21"/>
        <end position="22"/>
    </location>
    <ligand>
        <name>substrate</name>
    </ligand>
</feature>
<feature type="binding site" evidence="1">
    <location>
        <position position="60"/>
    </location>
    <ligand>
        <name>substrate</name>
    </ligand>
</feature>
<feature type="binding site" evidence="1">
    <location>
        <begin position="87"/>
        <end position="90"/>
    </location>
    <ligand>
        <name>substrate</name>
    </ligand>
</feature>
<feature type="binding site" evidence="1">
    <location>
        <position position="98"/>
    </location>
    <ligand>
        <name>substrate</name>
    </ligand>
</feature>
<feature type="binding site" evidence="1">
    <location>
        <begin position="114"/>
        <end position="115"/>
    </location>
    <ligand>
        <name>substrate</name>
    </ligand>
</feature>
<feature type="binding site" evidence="1">
    <location>
        <begin position="183"/>
        <end position="184"/>
    </location>
    <ligand>
        <name>substrate</name>
    </ligand>
</feature>
<feature type="site" description="Transition state stabilizer" evidence="1">
    <location>
        <position position="182"/>
    </location>
</feature>
<comment type="function">
    <text evidence="1">Catalyzes the interconversion of 2-phosphoglycerate and 3-phosphoglycerate.</text>
</comment>
<comment type="catalytic activity">
    <reaction evidence="1">
        <text>(2R)-2-phosphoglycerate = (2R)-3-phosphoglycerate</text>
        <dbReference type="Rhea" id="RHEA:15901"/>
        <dbReference type="ChEBI" id="CHEBI:58272"/>
        <dbReference type="ChEBI" id="CHEBI:58289"/>
        <dbReference type="EC" id="5.4.2.11"/>
    </reaction>
</comment>
<comment type="pathway">
    <text evidence="1">Carbohydrate degradation; glycolysis; pyruvate from D-glyceraldehyde 3-phosphate: step 3/5.</text>
</comment>
<comment type="similarity">
    <text evidence="1">Belongs to the phosphoglycerate mutase family. BPG-dependent PGAM subfamily.</text>
</comment>
<gene>
    <name evidence="1" type="primary">gpmA</name>
    <name type="ordered locus">SAR2506</name>
</gene>
<sequence length="228" mass="26724">MPKLILCRHGQSEWNAKNLFTGWEDVNLSEQGINEATRAGEKVRENNIDIDVAFTSLLTRALDTTHYILTESKQQWIPVYKSWRLNERHYGGLQGLNKDDARKEFGEEQVHIWRRSYDVKPPAETEEQREAYLADRRYNHLDKRMMPYSESLKDTLVRVIPFWTDHISQYLLDGQTVLVSAHGNSIRALIKYLEDVSDEDIINYEIKTGAPLVYELTDDLEVIDKYYL</sequence>
<reference key="1">
    <citation type="journal article" date="2004" name="Proc. Natl. Acad. Sci. U.S.A.">
        <title>Complete genomes of two clinical Staphylococcus aureus strains: evidence for the rapid evolution of virulence and drug resistance.</title>
        <authorList>
            <person name="Holden M.T.G."/>
            <person name="Feil E.J."/>
            <person name="Lindsay J.A."/>
            <person name="Peacock S.J."/>
            <person name="Day N.P.J."/>
            <person name="Enright M.C."/>
            <person name="Foster T.J."/>
            <person name="Moore C.E."/>
            <person name="Hurst L."/>
            <person name="Atkin R."/>
            <person name="Barron A."/>
            <person name="Bason N."/>
            <person name="Bentley S.D."/>
            <person name="Chillingworth C."/>
            <person name="Chillingworth T."/>
            <person name="Churcher C."/>
            <person name="Clark L."/>
            <person name="Corton C."/>
            <person name="Cronin A."/>
            <person name="Doggett J."/>
            <person name="Dowd L."/>
            <person name="Feltwell T."/>
            <person name="Hance Z."/>
            <person name="Harris B."/>
            <person name="Hauser H."/>
            <person name="Holroyd S."/>
            <person name="Jagels K."/>
            <person name="James K.D."/>
            <person name="Lennard N."/>
            <person name="Line A."/>
            <person name="Mayes R."/>
            <person name="Moule S."/>
            <person name="Mungall K."/>
            <person name="Ormond D."/>
            <person name="Quail M.A."/>
            <person name="Rabbinowitsch E."/>
            <person name="Rutherford K.M."/>
            <person name="Sanders M."/>
            <person name="Sharp S."/>
            <person name="Simmonds M."/>
            <person name="Stevens K."/>
            <person name="Whitehead S."/>
            <person name="Barrell B.G."/>
            <person name="Spratt B.G."/>
            <person name="Parkhill J."/>
        </authorList>
    </citation>
    <scope>NUCLEOTIDE SEQUENCE [LARGE SCALE GENOMIC DNA]</scope>
    <source>
        <strain>MRSA252</strain>
    </source>
</reference>
<protein>
    <recommendedName>
        <fullName evidence="1">2,3-bisphosphoglycerate-dependent phosphoglycerate mutase</fullName>
        <shortName evidence="1">BPG-dependent PGAM</shortName>
        <shortName evidence="1">PGAM</shortName>
        <shortName evidence="1">Phosphoglyceromutase</shortName>
        <shortName evidence="1">dPGM</shortName>
        <ecNumber evidence="1">5.4.2.11</ecNumber>
    </recommendedName>
</protein>
<organism>
    <name type="scientific">Staphylococcus aureus (strain MRSA252)</name>
    <dbReference type="NCBI Taxonomy" id="282458"/>
    <lineage>
        <taxon>Bacteria</taxon>
        <taxon>Bacillati</taxon>
        <taxon>Bacillota</taxon>
        <taxon>Bacilli</taxon>
        <taxon>Bacillales</taxon>
        <taxon>Staphylococcaceae</taxon>
        <taxon>Staphylococcus</taxon>
    </lineage>
</organism>
<evidence type="ECO:0000255" key="1">
    <source>
        <dbReference type="HAMAP-Rule" id="MF_01039"/>
    </source>
</evidence>
<name>GPMA_STAAR</name>
<proteinExistence type="inferred from homology"/>
<accession>Q6GE17</accession>